<comment type="function">
    <text evidence="2 5">Component of the THO subcomplex of the TREX complex which is thought to couple mRNA transcription, processing and nuclear export, and which specifically associates with spliced mRNA and not with unspliced pre-mRNA (By similarity). Required for efficient export of polyadenylated RNA (By similarity). The THOC1-THOC2-THOC3 core complex alone is sufficient to bind export factor NXF1-NXT1 and promote ATPase activity of DDX39B (By similarity). TREX is recruited to spliced mRNAs by a transcription-independent mechanism, binds to mRNA upstream of the exon-junction complex (EJC) and is recruited in a splicing- and cap-dependent manner to a region near the 5' end of the mRNA where it functions in mRNA export to the cytoplasm via the TAP/NXF1 pathway (By similarity). Regulates transcriptional elongation of a subset of genes (By similarity). Involved in genome stability by preventing co-transcriptional R-loop formation (By similarity). May play a role in hair cell formation, hence may be involved in hearing (PubMed:32776944).</text>
</comment>
<comment type="function">
    <text evidence="1">Participates in an apoptotic pathway which is characterized by activation of caspase-6, increases in the expression of BAK1 and BCL2L1 and activation of NF-kappa-B. This pathway does not require p53/TP53, nor does the presence of p53/TP53 affect the efficiency of cell killing. Activates a G2/M cell cycle checkpoint prior to the onset of apoptosis. Apoptosis is inhibited by association with RB1. Essential for early embryonic development. Required for normal gene expression during postnatal testis development.</text>
</comment>
<comment type="subunit">
    <text evidence="2">Component of the THO complex.</text>
</comment>
<comment type="subcellular location">
    <subcellularLocation>
        <location evidence="1">Nucleus</location>
    </subcellularLocation>
    <subcellularLocation>
        <location evidence="1">Nucleus</location>
        <location evidence="1">Nucleoplasm</location>
    </subcellularLocation>
    <subcellularLocation>
        <location evidence="1">Nucleus matrix</location>
    </subcellularLocation>
    <subcellularLocation>
        <location evidence="1">Cytoplasm</location>
        <location evidence="1">Cytosol</location>
    </subcellularLocation>
    <text evidence="1">Predominantly localized in the nucleus. Shuttles between the nucleus and cytosol. Nuclear localization is required for induction of apoptotic cell death. Translocates to the cytoplasm during the early phase of apoptosis execution.</text>
</comment>
<comment type="tissue specificity">
    <text evidence="5">Expressed in the developing neuromast.</text>
</comment>
<comment type="domain">
    <text evidence="2">An intact death domain is needed for apoptosis.</text>
</comment>
<comment type="disruption phenotype">
    <text evidence="5">Knockdown animals exhibit an impaired startle response, suggesting hearing dysfunction. They show greatly reduced hair cell numbers.</text>
</comment>
<sequence>MSPPSHFDFIEARDKFTVATKNAVDTRNCKPLTTAFSHLPGNETEKKATLDQALRGVLEEQIVNQKVNVDDFLSLIYISIDGVTEGICSATTPFLLLGDVLDCLPLDQCDKIFSFVEENVSTWKSNTFYSAGKNYLLRMCNDLLRRLSKSQNTVFCGRIQLFLARLFPLSEKSGLNLQSQFNLDNITVFNKNEQDSTLGQQHTEVKEEGMDVEEGEMGDEDAPAPSSIPIDYNLYRKFWTLQDYFRNPVQCYDKFSWMTFIKYSDEALAVFKSFKLDDMQASKKKLEEMRTSSGDHVYFAKFLTSEKLMDLQLSDSNFRRHILLQYLILFQYLKGQVKFKSSSCVLNDDQSLWIEDTTKLVYQLLKEIPPDGDKFGSMVEHILNTEENWNSWKNEGCPSFVKERPAETKPIRPSRKRQAPEDFLGKGPDRKILMGNDELTRLWNLNPDNMEACKSENREFMPSLEDFFEEAIEQADPANMVEDEYKVVRNSNYGWRALRLLSRRSPHFFQPTNQQFKSLADYLENMVIKLAKELPKDIPSEEIKTGEEDDDENGDNLLKDSNDSPSIQSKAVTNSQMDEIAAKLGSQWKTLADHLEMSDKEIRVIESDSEDVDLQAKMLLVAWQDREGSQATMESLVTALNAAGFNNIADNLSET</sequence>
<gene>
    <name type="primary">thoc1</name>
</gene>
<dbReference type="EMBL" id="BC054938">
    <property type="protein sequence ID" value="AAH54938.1"/>
    <property type="molecule type" value="mRNA"/>
</dbReference>
<dbReference type="EMBL" id="CABZ01057209">
    <property type="status" value="NOT_ANNOTATED_CDS"/>
    <property type="molecule type" value="Genomic_DNA"/>
</dbReference>
<dbReference type="EMBL" id="CABZ01057210">
    <property type="status" value="NOT_ANNOTATED_CDS"/>
    <property type="molecule type" value="Genomic_DNA"/>
</dbReference>
<dbReference type="RefSeq" id="NP_958481.1">
    <property type="nucleotide sequence ID" value="NM_201324.1"/>
</dbReference>
<dbReference type="SMR" id="Q7SYB2"/>
<dbReference type="GeneID" id="373077"/>
<dbReference type="KEGG" id="dre:373077"/>
<dbReference type="AGR" id="ZFIN:ZDB-GENE-030826-9"/>
<dbReference type="CTD" id="9984"/>
<dbReference type="ZFIN" id="ZDB-GENE-030826-9">
    <property type="gene designation" value="thoc1"/>
</dbReference>
<dbReference type="OrthoDB" id="10257415at2759"/>
<dbReference type="PhylomeDB" id="Q7SYB2"/>
<dbReference type="PRO" id="PR:Q7SYB2"/>
<dbReference type="Proteomes" id="UP000000437">
    <property type="component" value="Chromosome 2"/>
</dbReference>
<dbReference type="GO" id="GO:0005829">
    <property type="term" value="C:cytosol"/>
    <property type="evidence" value="ECO:0007669"/>
    <property type="project" value="UniProtKB-SubCell"/>
</dbReference>
<dbReference type="GO" id="GO:0016363">
    <property type="term" value="C:nuclear matrix"/>
    <property type="evidence" value="ECO:0007669"/>
    <property type="project" value="UniProtKB-SubCell"/>
</dbReference>
<dbReference type="GO" id="GO:0005654">
    <property type="term" value="C:nucleoplasm"/>
    <property type="evidence" value="ECO:0007669"/>
    <property type="project" value="UniProtKB-SubCell"/>
</dbReference>
<dbReference type="GO" id="GO:0000445">
    <property type="term" value="C:THO complex part of transcription export complex"/>
    <property type="evidence" value="ECO:0000318"/>
    <property type="project" value="GO_Central"/>
</dbReference>
<dbReference type="GO" id="GO:0003677">
    <property type="term" value="F:DNA binding"/>
    <property type="evidence" value="ECO:0007669"/>
    <property type="project" value="UniProtKB-KW"/>
</dbReference>
<dbReference type="GO" id="GO:0003723">
    <property type="term" value="F:RNA binding"/>
    <property type="evidence" value="ECO:0007669"/>
    <property type="project" value="UniProtKB-KW"/>
</dbReference>
<dbReference type="GO" id="GO:0006915">
    <property type="term" value="P:apoptotic process"/>
    <property type="evidence" value="ECO:0007669"/>
    <property type="project" value="UniProtKB-KW"/>
</dbReference>
<dbReference type="GO" id="GO:0006406">
    <property type="term" value="P:mRNA export from nucleus"/>
    <property type="evidence" value="ECO:0000318"/>
    <property type="project" value="GO_Central"/>
</dbReference>
<dbReference type="GO" id="GO:0006397">
    <property type="term" value="P:mRNA processing"/>
    <property type="evidence" value="ECO:0007669"/>
    <property type="project" value="UniProtKB-KW"/>
</dbReference>
<dbReference type="GO" id="GO:0042981">
    <property type="term" value="P:regulation of apoptotic process"/>
    <property type="evidence" value="ECO:0000315"/>
    <property type="project" value="ZFIN"/>
</dbReference>
<dbReference type="GO" id="GO:0008380">
    <property type="term" value="P:RNA splicing"/>
    <property type="evidence" value="ECO:0007669"/>
    <property type="project" value="UniProtKB-KW"/>
</dbReference>
<dbReference type="GO" id="GO:0007165">
    <property type="term" value="P:signal transduction"/>
    <property type="evidence" value="ECO:0007669"/>
    <property type="project" value="InterPro"/>
</dbReference>
<dbReference type="CDD" id="cd08318">
    <property type="entry name" value="Death_NMPP84"/>
    <property type="match status" value="1"/>
</dbReference>
<dbReference type="FunFam" id="1.10.533.10:FF:000108">
    <property type="entry name" value="THO complex 1"/>
    <property type="match status" value="1"/>
</dbReference>
<dbReference type="Gene3D" id="1.10.533.10">
    <property type="entry name" value="Death Domain, Fas"/>
    <property type="match status" value="1"/>
</dbReference>
<dbReference type="InterPro" id="IPR011029">
    <property type="entry name" value="DEATH-like_dom_sf"/>
</dbReference>
<dbReference type="InterPro" id="IPR000488">
    <property type="entry name" value="Death_dom"/>
</dbReference>
<dbReference type="InterPro" id="IPR021861">
    <property type="entry name" value="THO_THOC1"/>
</dbReference>
<dbReference type="PANTHER" id="PTHR13265">
    <property type="entry name" value="THO COMPLEX SUBUNIT 1"/>
    <property type="match status" value="1"/>
</dbReference>
<dbReference type="PANTHER" id="PTHR13265:SF2">
    <property type="entry name" value="THO COMPLEX SUBUNIT 1"/>
    <property type="match status" value="1"/>
</dbReference>
<dbReference type="Pfam" id="PF00531">
    <property type="entry name" value="Death"/>
    <property type="match status" value="1"/>
</dbReference>
<dbReference type="Pfam" id="PF11957">
    <property type="entry name" value="efThoc1"/>
    <property type="match status" value="1"/>
</dbReference>
<dbReference type="SMART" id="SM00005">
    <property type="entry name" value="DEATH"/>
    <property type="match status" value="1"/>
</dbReference>
<dbReference type="SUPFAM" id="SSF47986">
    <property type="entry name" value="DEATH domain"/>
    <property type="match status" value="1"/>
</dbReference>
<dbReference type="PROSITE" id="PS50017">
    <property type="entry name" value="DEATH_DOMAIN"/>
    <property type="match status" value="1"/>
</dbReference>
<feature type="chain" id="PRO_0000458470" description="THO complex subunit 1">
    <location>
        <begin position="1"/>
        <end position="655"/>
    </location>
</feature>
<feature type="domain" description="Death" evidence="3">
    <location>
        <begin position="573"/>
        <end position="655"/>
    </location>
</feature>
<feature type="region of interest" description="Disordered" evidence="4">
    <location>
        <begin position="403"/>
        <end position="427"/>
    </location>
</feature>
<feature type="region of interest" description="Disordered" evidence="4">
    <location>
        <begin position="539"/>
        <end position="574"/>
    </location>
</feature>
<feature type="short sequence motif" description="Nuclear localization signal" evidence="2">
    <location>
        <begin position="415"/>
        <end position="431"/>
    </location>
</feature>
<feature type="compositionally biased region" description="Basic and acidic residues" evidence="4">
    <location>
        <begin position="418"/>
        <end position="427"/>
    </location>
</feature>
<feature type="compositionally biased region" description="Polar residues" evidence="4">
    <location>
        <begin position="563"/>
        <end position="574"/>
    </location>
</feature>
<accession>Q7SYB2</accession>
<name>THOC1_DANRE</name>
<evidence type="ECO:0000250" key="1">
    <source>
        <dbReference type="UniProtKB" id="Q8R3N6"/>
    </source>
</evidence>
<evidence type="ECO:0000250" key="2">
    <source>
        <dbReference type="UniProtKB" id="Q96FV9"/>
    </source>
</evidence>
<evidence type="ECO:0000255" key="3">
    <source>
        <dbReference type="PROSITE-ProRule" id="PRU00064"/>
    </source>
</evidence>
<evidence type="ECO:0000256" key="4">
    <source>
        <dbReference type="SAM" id="MobiDB-lite"/>
    </source>
</evidence>
<evidence type="ECO:0000269" key="5">
    <source>
    </source>
</evidence>
<evidence type="ECO:0000312" key="6">
    <source>
        <dbReference type="EMBL" id="AAH54938.1"/>
    </source>
</evidence>
<organism evidence="6">
    <name type="scientific">Danio rerio</name>
    <name type="common">Zebrafish</name>
    <name type="synonym">Brachydanio rerio</name>
    <dbReference type="NCBI Taxonomy" id="7955"/>
    <lineage>
        <taxon>Eukaryota</taxon>
        <taxon>Metazoa</taxon>
        <taxon>Chordata</taxon>
        <taxon>Craniata</taxon>
        <taxon>Vertebrata</taxon>
        <taxon>Euteleostomi</taxon>
        <taxon>Actinopterygii</taxon>
        <taxon>Neopterygii</taxon>
        <taxon>Teleostei</taxon>
        <taxon>Ostariophysi</taxon>
        <taxon>Cypriniformes</taxon>
        <taxon>Danionidae</taxon>
        <taxon>Danioninae</taxon>
        <taxon>Danio</taxon>
    </lineage>
</organism>
<reference key="1">
    <citation type="journal article" date="2013" name="Nature">
        <title>The zebrafish reference genome sequence and its relationship to the human genome.</title>
        <authorList>
            <person name="Howe K."/>
            <person name="Clark M.D."/>
            <person name="Torroja C.F."/>
            <person name="Torrance J."/>
            <person name="Berthelot C."/>
            <person name="Muffato M."/>
            <person name="Collins J.E."/>
            <person name="Humphray S."/>
            <person name="McLaren K."/>
            <person name="Matthews L."/>
            <person name="McLaren S."/>
            <person name="Sealy I."/>
            <person name="Caccamo M."/>
            <person name="Churcher C."/>
            <person name="Scott C."/>
            <person name="Barrett J.C."/>
            <person name="Koch R."/>
            <person name="Rauch G.J."/>
            <person name="White S."/>
            <person name="Chow W."/>
            <person name="Kilian B."/>
            <person name="Quintais L.T."/>
            <person name="Guerra-Assuncao J.A."/>
            <person name="Zhou Y."/>
            <person name="Gu Y."/>
            <person name="Yen J."/>
            <person name="Vogel J.H."/>
            <person name="Eyre T."/>
            <person name="Redmond S."/>
            <person name="Banerjee R."/>
            <person name="Chi J."/>
            <person name="Fu B."/>
            <person name="Langley E."/>
            <person name="Maguire S.F."/>
            <person name="Laird G.K."/>
            <person name="Lloyd D."/>
            <person name="Kenyon E."/>
            <person name="Donaldson S."/>
            <person name="Sehra H."/>
            <person name="Almeida-King J."/>
            <person name="Loveland J."/>
            <person name="Trevanion S."/>
            <person name="Jones M."/>
            <person name="Quail M."/>
            <person name="Willey D."/>
            <person name="Hunt A."/>
            <person name="Burton J."/>
            <person name="Sims S."/>
            <person name="McLay K."/>
            <person name="Plumb B."/>
            <person name="Davis J."/>
            <person name="Clee C."/>
            <person name="Oliver K."/>
            <person name="Clark R."/>
            <person name="Riddle C."/>
            <person name="Elliot D."/>
            <person name="Threadgold G."/>
            <person name="Harden G."/>
            <person name="Ware D."/>
            <person name="Begum S."/>
            <person name="Mortimore B."/>
            <person name="Kerry G."/>
            <person name="Heath P."/>
            <person name="Phillimore B."/>
            <person name="Tracey A."/>
            <person name="Corby N."/>
            <person name="Dunn M."/>
            <person name="Johnson C."/>
            <person name="Wood J."/>
            <person name="Clark S."/>
            <person name="Pelan S."/>
            <person name="Griffiths G."/>
            <person name="Smith M."/>
            <person name="Glithero R."/>
            <person name="Howden P."/>
            <person name="Barker N."/>
            <person name="Lloyd C."/>
            <person name="Stevens C."/>
            <person name="Harley J."/>
            <person name="Holt K."/>
            <person name="Panagiotidis G."/>
            <person name="Lovell J."/>
            <person name="Beasley H."/>
            <person name="Henderson C."/>
            <person name="Gordon D."/>
            <person name="Auger K."/>
            <person name="Wright D."/>
            <person name="Collins J."/>
            <person name="Raisen C."/>
            <person name="Dyer L."/>
            <person name="Leung K."/>
            <person name="Robertson L."/>
            <person name="Ambridge K."/>
            <person name="Leongamornlert D."/>
            <person name="McGuire S."/>
            <person name="Gilderthorp R."/>
            <person name="Griffiths C."/>
            <person name="Manthravadi D."/>
            <person name="Nichol S."/>
            <person name="Barker G."/>
            <person name="Whitehead S."/>
            <person name="Kay M."/>
            <person name="Brown J."/>
            <person name="Murnane C."/>
            <person name="Gray E."/>
            <person name="Humphries M."/>
            <person name="Sycamore N."/>
            <person name="Barker D."/>
            <person name="Saunders D."/>
            <person name="Wallis J."/>
            <person name="Babbage A."/>
            <person name="Hammond S."/>
            <person name="Mashreghi-Mohammadi M."/>
            <person name="Barr L."/>
            <person name="Martin S."/>
            <person name="Wray P."/>
            <person name="Ellington A."/>
            <person name="Matthews N."/>
            <person name="Ellwood M."/>
            <person name="Woodmansey R."/>
            <person name="Clark G."/>
            <person name="Cooper J."/>
            <person name="Tromans A."/>
            <person name="Grafham D."/>
            <person name="Skuce C."/>
            <person name="Pandian R."/>
            <person name="Andrews R."/>
            <person name="Harrison E."/>
            <person name="Kimberley A."/>
            <person name="Garnett J."/>
            <person name="Fosker N."/>
            <person name="Hall R."/>
            <person name="Garner P."/>
            <person name="Kelly D."/>
            <person name="Bird C."/>
            <person name="Palmer S."/>
            <person name="Gehring I."/>
            <person name="Berger A."/>
            <person name="Dooley C.M."/>
            <person name="Ersan-Urun Z."/>
            <person name="Eser C."/>
            <person name="Geiger H."/>
            <person name="Geisler M."/>
            <person name="Karotki L."/>
            <person name="Kirn A."/>
            <person name="Konantz J."/>
            <person name="Konantz M."/>
            <person name="Oberlander M."/>
            <person name="Rudolph-Geiger S."/>
            <person name="Teucke M."/>
            <person name="Lanz C."/>
            <person name="Raddatz G."/>
            <person name="Osoegawa K."/>
            <person name="Zhu B."/>
            <person name="Rapp A."/>
            <person name="Widaa S."/>
            <person name="Langford C."/>
            <person name="Yang F."/>
            <person name="Schuster S.C."/>
            <person name="Carter N.P."/>
            <person name="Harrow J."/>
            <person name="Ning Z."/>
            <person name="Herrero J."/>
            <person name="Searle S.M."/>
            <person name="Enright A."/>
            <person name="Geisler R."/>
            <person name="Plasterk R.H."/>
            <person name="Lee C."/>
            <person name="Westerfield M."/>
            <person name="de Jong P.J."/>
            <person name="Zon L.I."/>
            <person name="Postlethwait J.H."/>
            <person name="Nusslein-Volhard C."/>
            <person name="Hubbard T.J."/>
            <person name="Roest Crollius H."/>
            <person name="Rogers J."/>
            <person name="Stemple D.L."/>
        </authorList>
    </citation>
    <scope>NUCLEOTIDE SEQUENCE [LARGE SCALE GENOMIC DNA]</scope>
    <source>
        <strain>Tuebingen</strain>
    </source>
</reference>
<reference key="2">
    <citation type="submission" date="2003-07" db="EMBL/GenBank/DDBJ databases">
        <authorList>
            <consortium name="NIH - Zebrafish Gene Collection (ZGC) project"/>
        </authorList>
    </citation>
    <scope>NUCLEOTIDE SEQUENCE [LARGE SCALE MRNA]</scope>
    <source>
        <strain>AB</strain>
    </source>
</reference>
<reference key="3">
    <citation type="journal article" date="2020" name="PLoS Genet.">
        <title>THOC1 deficiency leads to late-onset nonsyndromic hearing loss through p53-mediated hair cell apoptosis.</title>
        <authorList>
            <person name="Zhang L."/>
            <person name="Gao Y."/>
            <person name="Zhang R."/>
            <person name="Sun F."/>
            <person name="Cheng C."/>
            <person name="Qian F."/>
            <person name="Duan X."/>
            <person name="Wei G."/>
            <person name="Sun C."/>
            <person name="Pang X."/>
            <person name="Chen P."/>
            <person name="Chai R."/>
            <person name="Yang T."/>
            <person name="Wu H."/>
            <person name="Liu D."/>
        </authorList>
    </citation>
    <scope>FUNCTION</scope>
    <scope>DISRUPTION PHENOTYPE</scope>
    <scope>TISSUE SPECIFICITY</scope>
</reference>
<keyword id="KW-0053">Apoptosis</keyword>
<keyword id="KW-0963">Cytoplasm</keyword>
<keyword id="KW-0238">DNA-binding</keyword>
<keyword id="KW-0507">mRNA processing</keyword>
<keyword id="KW-0508">mRNA splicing</keyword>
<keyword id="KW-0509">mRNA transport</keyword>
<keyword id="KW-0539">Nucleus</keyword>
<keyword id="KW-1185">Reference proteome</keyword>
<keyword id="KW-0694">RNA-binding</keyword>
<keyword id="KW-0804">Transcription</keyword>
<keyword id="KW-0805">Transcription regulation</keyword>
<keyword id="KW-0813">Transport</keyword>
<proteinExistence type="evidence at transcript level"/>
<protein>
    <recommendedName>
        <fullName>THO complex subunit 1</fullName>
    </recommendedName>
</protein>